<accession>Q6L4V0</accession>
<accession>A0A0P0WP46</accession>
<proteinExistence type="evidence at transcript level"/>
<feature type="chain" id="PRO_0000432122" description="DNA mismatch repair protein MSH5">
    <location>
        <begin position="1"/>
        <end position="809"/>
    </location>
</feature>
<feature type="binding site" evidence="1">
    <location>
        <begin position="572"/>
        <end position="579"/>
    </location>
    <ligand>
        <name>ATP</name>
        <dbReference type="ChEBI" id="CHEBI:30616"/>
    </ligand>
</feature>
<sequence>MDEEEEEEMSEREVDSQVHMACVMQGRRVGIAYYDSSMHQLFVLEIWEDITEDFPLIDLVKYQSKPSTIYTSTKTDEALLLALQRNDCNDEAPAVKLMKSSTFSYEQAWHRLMYLKVAAMDEGLSVKERICFLNSMMDLGSDVQVRAAGGLLAILDNERLLDTLDQMEGGASIAIDSVAQISLDKFLKLDATAHEALQIFQVDKHPSYMGIGRAKEGFSVFGMLNKCVTPMGKHLLRTWFLRPIIDIDVINNRLNTISFFLCCEDVMSALRGTLKSVRDIPHMLKKFNSPSSFCTSSDWHAFLKCICSLLHINKIFEVGISEHLAIKLQHMNIDLVGKANSSITEELDYVSDLVVGVIDVQRGKEKGYDTLVKDGLCEELDELRMVYEELPDFLEQVSANEIASFPFSFECRKAPLIVYVHQIGYLMCFFDEKISDALLIGLPDFEFAFSEEGEERRFYYHTQKTRELDNLLGDIYHKILDMERAIIRDLVCRVCQFIPQLTKAVNFAAELDCILSLAIVARQNNYVRPILTEDSILEIQNGRHALQEMTVDTFVPNDTKIRSSGRINIITGPNYSGKSIYIKQVALVVFLAHIGSFVPADSAIVGLTDRIFCAMGSKSMTSEQSTFMIDLHQVGTMLRHATSRSLCLLDEFGKGTLTEDGIGLLGGTISHFTDYDCPPKVLLSTHLTQIFTESYLPQSEHIKCYTMSVLNPDEQTDNEDVIFLYRLVPGQALLSFGLHCAQLAGVPSEVVQRAVTVLGDIHSKRPIRRMVWEKLAAKDQQYQDAVTKLLAFDPHKGDLVNFFQEVFPS</sequence>
<gene>
    <name evidence="3" type="primary">MSH5</name>
    <name evidence="6" type="ordered locus">Os05g0498300</name>
    <name evidence="4" type="ordered locus">LOC_Os05g41880</name>
    <name evidence="5" type="ORF">P0010D04.9</name>
</gene>
<organism>
    <name type="scientific">Oryza sativa subsp. japonica</name>
    <name type="common">Rice</name>
    <dbReference type="NCBI Taxonomy" id="39947"/>
    <lineage>
        <taxon>Eukaryota</taxon>
        <taxon>Viridiplantae</taxon>
        <taxon>Streptophyta</taxon>
        <taxon>Embryophyta</taxon>
        <taxon>Tracheophyta</taxon>
        <taxon>Spermatophyta</taxon>
        <taxon>Magnoliopsida</taxon>
        <taxon>Liliopsida</taxon>
        <taxon>Poales</taxon>
        <taxon>Poaceae</taxon>
        <taxon>BOP clade</taxon>
        <taxon>Oryzoideae</taxon>
        <taxon>Oryzeae</taxon>
        <taxon>Oryzinae</taxon>
        <taxon>Oryza</taxon>
        <taxon>Oryza sativa</taxon>
    </lineage>
</organism>
<comment type="function">
    <text evidence="2">Involved in meiotic recombination. Required for reciprocal recombination and proper segregation of homologous chromosomes at meiosis. Promotes homologous recombination through facilitating chiasma formation during prophase I. Involved in the control of class I crossover (interference-sensitive crossover) formation.</text>
</comment>
<comment type="subcellular location">
    <subcellularLocation>
        <location evidence="2">Nucleus</location>
    </subcellularLocation>
    <subcellularLocation>
        <location evidence="2">Chromosome</location>
    </subcellularLocation>
    <text evidence="2">Detected in punctuate foci onto the chromosomes during the early meiotic prophase I.</text>
</comment>
<comment type="tissue specificity">
    <text evidence="2">Highly expressed in the panicles.</text>
</comment>
<comment type="disruption phenotype">
    <text evidence="2">Normal vegetative growth but severe reduction in fertility due to a decrease in chiasma frequency at metaphase I of meiosis.</text>
</comment>
<comment type="similarity">
    <text evidence="4">Belongs to the DNA mismatch repair MutS family.</text>
</comment>
<name>MSH5_ORYSJ</name>
<keyword id="KW-0067">ATP-binding</keyword>
<keyword id="KW-0158">Chromosome</keyword>
<keyword id="KW-0238">DNA-binding</keyword>
<keyword id="KW-0469">Meiosis</keyword>
<keyword id="KW-0547">Nucleotide-binding</keyword>
<keyword id="KW-0539">Nucleus</keyword>
<keyword id="KW-1185">Reference proteome</keyword>
<evidence type="ECO:0000255" key="1"/>
<evidence type="ECO:0000269" key="2">
    <source>
    </source>
</evidence>
<evidence type="ECO:0000303" key="3">
    <source>
    </source>
</evidence>
<evidence type="ECO:0000305" key="4"/>
<evidence type="ECO:0000312" key="5">
    <source>
        <dbReference type="EMBL" id="AAT44285.1"/>
    </source>
</evidence>
<evidence type="ECO:0000312" key="6">
    <source>
        <dbReference type="EMBL" id="BAF17862.1"/>
    </source>
</evidence>
<dbReference type="EMBL" id="AC130605">
    <property type="protein sequence ID" value="AAT44285.1"/>
    <property type="molecule type" value="Genomic_DNA"/>
</dbReference>
<dbReference type="EMBL" id="AP008211">
    <property type="protein sequence ID" value="BAF17862.1"/>
    <property type="molecule type" value="Genomic_DNA"/>
</dbReference>
<dbReference type="EMBL" id="AP014961">
    <property type="protein sequence ID" value="BAS94731.1"/>
    <property type="molecule type" value="Genomic_DNA"/>
</dbReference>
<dbReference type="RefSeq" id="XP_015639362.1">
    <property type="nucleotide sequence ID" value="XM_015783876.1"/>
</dbReference>
<dbReference type="SMR" id="Q6L4V0"/>
<dbReference type="FunCoup" id="Q6L4V0">
    <property type="interactions" value="371"/>
</dbReference>
<dbReference type="STRING" id="39947.Q6L4V0"/>
<dbReference type="PaxDb" id="39947-Q6L4V0"/>
<dbReference type="EnsemblPlants" id="Os05t0498300-01">
    <property type="protein sequence ID" value="Os05t0498300-01"/>
    <property type="gene ID" value="Os05g0498300"/>
</dbReference>
<dbReference type="Gramene" id="Os05t0498300-01">
    <property type="protein sequence ID" value="Os05t0498300-01"/>
    <property type="gene ID" value="Os05g0498300"/>
</dbReference>
<dbReference type="KEGG" id="dosa:Os05g0498300"/>
<dbReference type="eggNOG" id="KOG0221">
    <property type="taxonomic scope" value="Eukaryota"/>
</dbReference>
<dbReference type="HOGENOM" id="CLU_002472_8_2_1"/>
<dbReference type="InParanoid" id="Q6L4V0"/>
<dbReference type="OMA" id="CSVYFMP"/>
<dbReference type="OrthoDB" id="29596at2759"/>
<dbReference type="Proteomes" id="UP000000763">
    <property type="component" value="Chromosome 5"/>
</dbReference>
<dbReference type="Proteomes" id="UP000059680">
    <property type="component" value="Chromosome 5"/>
</dbReference>
<dbReference type="GO" id="GO:0005694">
    <property type="term" value="C:chromosome"/>
    <property type="evidence" value="ECO:0007669"/>
    <property type="project" value="UniProtKB-SubCell"/>
</dbReference>
<dbReference type="GO" id="GO:0005634">
    <property type="term" value="C:nucleus"/>
    <property type="evidence" value="ECO:0000318"/>
    <property type="project" value="GO_Central"/>
</dbReference>
<dbReference type="GO" id="GO:0005524">
    <property type="term" value="F:ATP binding"/>
    <property type="evidence" value="ECO:0007669"/>
    <property type="project" value="UniProtKB-KW"/>
</dbReference>
<dbReference type="GO" id="GO:0140664">
    <property type="term" value="F:ATP-dependent DNA damage sensor activity"/>
    <property type="evidence" value="ECO:0007669"/>
    <property type="project" value="InterPro"/>
</dbReference>
<dbReference type="GO" id="GO:0003690">
    <property type="term" value="F:double-stranded DNA binding"/>
    <property type="evidence" value="ECO:0000318"/>
    <property type="project" value="GO_Central"/>
</dbReference>
<dbReference type="GO" id="GO:0030983">
    <property type="term" value="F:mismatched DNA binding"/>
    <property type="evidence" value="ECO:0007669"/>
    <property type="project" value="InterPro"/>
</dbReference>
<dbReference type="GO" id="GO:0051026">
    <property type="term" value="P:chiasma assembly"/>
    <property type="evidence" value="ECO:0000315"/>
    <property type="project" value="UniProtKB"/>
</dbReference>
<dbReference type="GO" id="GO:0045143">
    <property type="term" value="P:homologous chromosome segregation"/>
    <property type="evidence" value="ECO:0000315"/>
    <property type="project" value="UniProtKB"/>
</dbReference>
<dbReference type="GO" id="GO:0006298">
    <property type="term" value="P:mismatch repair"/>
    <property type="evidence" value="ECO:0007669"/>
    <property type="project" value="InterPro"/>
</dbReference>
<dbReference type="GO" id="GO:0007131">
    <property type="term" value="P:reciprocal meiotic recombination"/>
    <property type="evidence" value="ECO:0000315"/>
    <property type="project" value="UniProtKB"/>
</dbReference>
<dbReference type="GO" id="GO:0000712">
    <property type="term" value="P:resolution of meiotic recombination intermediates"/>
    <property type="evidence" value="ECO:0000315"/>
    <property type="project" value="UniProtKB"/>
</dbReference>
<dbReference type="CDD" id="cd03281">
    <property type="entry name" value="ABC_MSH5_euk"/>
    <property type="match status" value="1"/>
</dbReference>
<dbReference type="FunFam" id="3.40.50.300:FF:001067">
    <property type="entry name" value="DNA mismatch repair protein MSH5"/>
    <property type="match status" value="1"/>
</dbReference>
<dbReference type="Gene3D" id="1.10.1420.10">
    <property type="match status" value="2"/>
</dbReference>
<dbReference type="Gene3D" id="3.40.50.300">
    <property type="entry name" value="P-loop containing nucleotide triphosphate hydrolases"/>
    <property type="match status" value="1"/>
</dbReference>
<dbReference type="InterPro" id="IPR017261">
    <property type="entry name" value="DNA_mismatch_repair_MutS/MSH"/>
</dbReference>
<dbReference type="InterPro" id="IPR000432">
    <property type="entry name" value="DNA_mismatch_repair_MutS_C"/>
</dbReference>
<dbReference type="InterPro" id="IPR007696">
    <property type="entry name" value="DNA_mismatch_repair_MutS_core"/>
</dbReference>
<dbReference type="InterPro" id="IPR036187">
    <property type="entry name" value="DNA_mismatch_repair_MutS_sf"/>
</dbReference>
<dbReference type="InterPro" id="IPR045076">
    <property type="entry name" value="MutS"/>
</dbReference>
<dbReference type="InterPro" id="IPR027417">
    <property type="entry name" value="P-loop_NTPase"/>
</dbReference>
<dbReference type="PANTHER" id="PTHR11361">
    <property type="entry name" value="DNA MISMATCH REPAIR PROTEIN MUTS FAMILY MEMBER"/>
    <property type="match status" value="1"/>
</dbReference>
<dbReference type="PANTHER" id="PTHR11361:SF20">
    <property type="entry name" value="MUTS PROTEIN HOMOLOG 5"/>
    <property type="match status" value="1"/>
</dbReference>
<dbReference type="Pfam" id="PF05192">
    <property type="entry name" value="MutS_III"/>
    <property type="match status" value="1"/>
</dbReference>
<dbReference type="Pfam" id="PF00488">
    <property type="entry name" value="MutS_V"/>
    <property type="match status" value="1"/>
</dbReference>
<dbReference type="PIRSF" id="PIRSF037677">
    <property type="entry name" value="DNA_mis_repair_Msh6"/>
    <property type="match status" value="1"/>
</dbReference>
<dbReference type="SMART" id="SM00534">
    <property type="entry name" value="MUTSac"/>
    <property type="match status" value="1"/>
</dbReference>
<dbReference type="SMART" id="SM00533">
    <property type="entry name" value="MUTSd"/>
    <property type="match status" value="1"/>
</dbReference>
<dbReference type="SUPFAM" id="SSF48334">
    <property type="entry name" value="DNA repair protein MutS, domain III"/>
    <property type="match status" value="1"/>
</dbReference>
<dbReference type="SUPFAM" id="SSF52540">
    <property type="entry name" value="P-loop containing nucleoside triphosphate hydrolases"/>
    <property type="match status" value="1"/>
</dbReference>
<dbReference type="PROSITE" id="PS00486">
    <property type="entry name" value="DNA_MISMATCH_REPAIR_2"/>
    <property type="match status" value="1"/>
</dbReference>
<reference key="1">
    <citation type="journal article" date="2005" name="Mol. Genet. Genomics">
        <title>A fine physical map of the rice chromosome 5.</title>
        <authorList>
            <person name="Cheng C.-H."/>
            <person name="Chung M.C."/>
            <person name="Liu S.-M."/>
            <person name="Chen S.-K."/>
            <person name="Kao F.Y."/>
            <person name="Lin S.-J."/>
            <person name="Hsiao S.-H."/>
            <person name="Tseng I.C."/>
            <person name="Hsing Y.-I.C."/>
            <person name="Wu H.-P."/>
            <person name="Chen C.-S."/>
            <person name="Shaw J.-F."/>
            <person name="Wu J."/>
            <person name="Matsumoto T."/>
            <person name="Sasaki T."/>
            <person name="Chen H.-C."/>
            <person name="Chow T.-Y."/>
        </authorList>
    </citation>
    <scope>NUCLEOTIDE SEQUENCE [LARGE SCALE GENOMIC DNA]</scope>
    <source>
        <strain>cv. Nipponbare</strain>
    </source>
</reference>
<reference key="2">
    <citation type="journal article" date="2005" name="Nature">
        <title>The map-based sequence of the rice genome.</title>
        <authorList>
            <consortium name="International rice genome sequencing project (IRGSP)"/>
        </authorList>
    </citation>
    <scope>NUCLEOTIDE SEQUENCE [LARGE SCALE GENOMIC DNA]</scope>
    <source>
        <strain>cv. Nipponbare</strain>
    </source>
</reference>
<reference key="3">
    <citation type="journal article" date="2008" name="Nucleic Acids Res.">
        <title>The rice annotation project database (RAP-DB): 2008 update.</title>
        <authorList>
            <consortium name="The rice annotation project (RAP)"/>
        </authorList>
    </citation>
    <scope>GENOME REANNOTATION</scope>
    <source>
        <strain>cv. Nipponbare</strain>
    </source>
</reference>
<reference key="4">
    <citation type="journal article" date="2013" name="Rice">
        <title>Improvement of the Oryza sativa Nipponbare reference genome using next generation sequence and optical map data.</title>
        <authorList>
            <person name="Kawahara Y."/>
            <person name="de la Bastide M."/>
            <person name="Hamilton J.P."/>
            <person name="Kanamori H."/>
            <person name="McCombie W.R."/>
            <person name="Ouyang S."/>
            <person name="Schwartz D.C."/>
            <person name="Tanaka T."/>
            <person name="Wu J."/>
            <person name="Zhou S."/>
            <person name="Childs K.L."/>
            <person name="Davidson R.M."/>
            <person name="Lin H."/>
            <person name="Quesada-Ocampo L."/>
            <person name="Vaillancourt B."/>
            <person name="Sakai H."/>
            <person name="Lee S.S."/>
            <person name="Kim J."/>
            <person name="Numa H."/>
            <person name="Itoh T."/>
            <person name="Buell C.R."/>
            <person name="Matsumoto T."/>
        </authorList>
    </citation>
    <scope>GENOME REANNOTATION</scope>
    <source>
        <strain>cv. Nipponbare</strain>
    </source>
</reference>
<reference key="5">
    <citation type="journal article" date="2013" name="Mol. Plant">
        <title>The role of OsMSH5 in crossover formation during rice meiosis.</title>
        <authorList>
            <person name="Luo Q."/>
            <person name="Tang D."/>
            <person name="Wang M."/>
            <person name="Luo W."/>
            <person name="Zhang L."/>
            <person name="Qin B."/>
            <person name="Shen Y."/>
            <person name="Wang K."/>
            <person name="Li Y."/>
            <person name="Cheng Z."/>
        </authorList>
    </citation>
    <scope>FUNCTION</scope>
    <scope>SUBCELLULAR LOCATION</scope>
    <scope>TISSUE SPECIFICITY</scope>
    <scope>DISRUPTION PHENOTYPE</scope>
</reference>
<protein>
    <recommendedName>
        <fullName evidence="4">DNA mismatch repair protein MSH5</fullName>
        <shortName evidence="3">OsMSH5</shortName>
    </recommendedName>
    <alternativeName>
        <fullName evidence="4">MutS protein homolog 5</fullName>
    </alternativeName>
</protein>